<evidence type="ECO:0000250" key="1">
    <source>
        <dbReference type="UniProtKB" id="E9Q9K5"/>
    </source>
</evidence>
<evidence type="ECO:0000250" key="2">
    <source>
        <dbReference type="UniProtKB" id="Q13061"/>
    </source>
</evidence>
<evidence type="ECO:0000255" key="3"/>
<evidence type="ECO:0000256" key="4">
    <source>
        <dbReference type="SAM" id="MobiDB-lite"/>
    </source>
</evidence>
<evidence type="ECO:0000269" key="5">
    <source>
    </source>
</evidence>
<evidence type="ECO:0000269" key="6">
    <source>
    </source>
</evidence>
<evidence type="ECO:0000269" key="7">
    <source>
    </source>
</evidence>
<evidence type="ECO:0000269" key="8">
    <source>
    </source>
</evidence>
<evidence type="ECO:0000269" key="9">
    <source>
    </source>
</evidence>
<evidence type="ECO:0000269" key="10">
    <source>
    </source>
</evidence>
<evidence type="ECO:0000269" key="11">
    <source>
    </source>
</evidence>
<evidence type="ECO:0000269" key="12">
    <source>
    </source>
</evidence>
<evidence type="ECO:0000269" key="13">
    <source>
    </source>
</evidence>
<evidence type="ECO:0000303" key="14">
    <source>
    </source>
</evidence>
<evidence type="ECO:0000305" key="15"/>
<organism>
    <name type="scientific">Oryctolagus cuniculus</name>
    <name type="common">Rabbit</name>
    <dbReference type="NCBI Taxonomy" id="9986"/>
    <lineage>
        <taxon>Eukaryota</taxon>
        <taxon>Metazoa</taxon>
        <taxon>Chordata</taxon>
        <taxon>Craniata</taxon>
        <taxon>Vertebrata</taxon>
        <taxon>Euteleostomi</taxon>
        <taxon>Mammalia</taxon>
        <taxon>Eutheria</taxon>
        <taxon>Euarchontoglires</taxon>
        <taxon>Glires</taxon>
        <taxon>Lagomorpha</taxon>
        <taxon>Leporidae</taxon>
        <taxon>Oryctolagus</taxon>
    </lineage>
</organism>
<sequence>MTEITAEGNASTTTTVIDSKNGSVPKSPGKVLKRTVTEDLVTTFSSPAAWLLVIALIITWSAVAVVMFDLVDYKNFSASSIAKMGSDPLKLVHDAVEETTDWIYGFFSLLSDIISSDGDEEDDEGDEDTAKGEIEEPPLKRKDIHKEKIEKQEKPERKIPTKVVHKEKEKEKEKVKEKEKPEKKATHKEKLEKKEKPETKTVTKEEKKARTKEKIEEKTKKEVKGVKQEKVKQTVAKAKEVQKTPKPKEKESKETAAVSKQEQKDQYAFCRYMIDIFVHGDLKPGQSPAIPPPSPTEQASRPTPALPTPEEKEGEKKKAEKKVTTETKKKAEKEDAKKKSEKETDIDMKKKEPGKSPDTKPGTVKVTTQAATKKDEKKEDSKKAKKPAEEQPKGKKQEKKEKHEEPAKSTKKEHAAPSEKQAKAKIERKEEVSAASTKKAVPAKKEEKTTKTVEQETRKEKPGKISSVLKDKELTKEKEVKVPASLKEKGSETKKDEKTSKPEPQIKKEEKPGKEVKPKPPQPQIKKEEKPEQDIMKPEKTALHGKPEEKVLKQVKAVTTEKHVKPKPAKKAEHQEKEPPSIKTDKPKSTSKGMPEVTESGKKKIEKSEKEIKVPARRESHQLQNVTKAEKPARGSKEGFEDVPASKKAKEEAEEVSSTKKQKSPISFFQCVYLDGYNGYGFQFPVTPAQYPGESSGKPNSPGPKQ</sequence>
<accession>Q28820</accession>
<accession>Q28636</accession>
<accession>Q28637</accession>
<accession>Q28643</accession>
<gene>
    <name type="primary">TRDN</name>
</gene>
<reference key="1">
    <citation type="journal article" date="1993" name="J. Biol. Chem.">
        <title>Primary structure and topological analysis of a skeletal muscle-specific junctional sarcoplasmic reticulum glycoprotein (triadin).</title>
        <authorList>
            <person name="Knudson C.M."/>
            <person name="Stang K.K."/>
            <person name="Moomaw C.R."/>
            <person name="Slaughter C.A."/>
            <person name="Campbell K.P."/>
        </authorList>
    </citation>
    <scope>NUCLEOTIDE SEQUENCE [MRNA] (ISOFORM SKELETAL 1)</scope>
    <scope>PARTIAL PROTEIN SEQUENCE</scope>
    <scope>TISSUE SPECIFICITY</scope>
    <scope>SUBCELLULAR LOCATION</scope>
    <scope>TOPOLOGY</scope>
    <source>
        <strain>New Zealand white</strain>
        <tissue>Skeletal muscle</tissue>
    </source>
</reference>
<reference key="2">
    <citation type="journal article" date="1994" name="FEBS Lett.">
        <title>Structural diversity of triadin in skeletal muscle and evidence of its existence in heart.</title>
        <authorList>
            <person name="Peng M."/>
            <person name="Fan H."/>
            <person name="Kirley T.L."/>
            <person name="Caswell A.H."/>
            <person name="Schwartz A."/>
        </authorList>
    </citation>
    <scope>NUCLEOTIDE SEQUENCE [MRNA] (ISOFORMS SKELETAL 1; SKELETAL 2 AND SKELETAL 3)</scope>
    <scope>PARTIAL PROTEIN SEQUENCE</scope>
    <scope>TISSUE SPECIFICITY</scope>
    <source>
        <tissue>Skeletal muscle</tissue>
    </source>
</reference>
<reference key="3">
    <citation type="journal article" date="1996" name="J. Biol. Chem.">
        <title>Biochemical characterization and molecular cloning of cardiac triadin.</title>
        <authorList>
            <person name="Guo W."/>
            <person name="Jorgensen A.O."/>
            <person name="Jones L.R."/>
            <person name="Campbell K.P."/>
        </authorList>
    </citation>
    <scope>NUCLEOTIDE SEQUENCE [MRNA] (ISOFORMS CARDIAC 1; CARDIAC 2 AND CARDIAC 3)</scope>
    <scope>PARTIAL PROTEIN SEQUENCE</scope>
    <scope>TISSUE SPECIFICITY</scope>
    <scope>SUBCELLULAR LOCATION</scope>
    <scope>TOPOLOGY</scope>
    <source>
        <tissue>Heart muscle</tissue>
    </source>
</reference>
<reference key="4">
    <citation type="journal article" date="1995" name="Biochemistry">
        <title>Disulfide bonds, N-glycosylation and transmembrane topology of skeletal muscle triadin.</title>
        <authorList>
            <person name="Fan H."/>
            <person name="Brandt N.R."/>
            <person name="Caswell A.H."/>
        </authorList>
    </citation>
    <scope>GLYCOSYLATION AT ASN-625</scope>
    <scope>SUBUNIT</scope>
    <scope>DISULFIDE BOND</scope>
</reference>
<reference key="5">
    <citation type="journal article" date="1995" name="J. Biol. Chem.">
        <title>Association of triadin with the ryanodine receptor and calsequestrin in the lumen of the sarcoplasmic reticulum.</title>
        <authorList>
            <person name="Guo W."/>
            <person name="Campbell K.P."/>
        </authorList>
    </citation>
    <scope>INTERACTION WITH RYR1 AND CASQ1</scope>
    <scope>FUNCTION</scope>
    <scope>SUBCELLULAR LOCATION</scope>
    <scope>TOPOLOGY</scope>
</reference>
<reference key="6">
    <citation type="journal article" date="2001" name="Mol. Cell. Biochem.">
        <title>Phosphorylation of the triadin cytoplasmic domain by CaM protein kinase in rabbit fast-twitch muscle sarcoplasmic reticulum.</title>
        <authorList>
            <person name="Colpo P."/>
            <person name="Nori A."/>
            <person name="Sacchetto R."/>
            <person name="Damiani E."/>
            <person name="Margreth A."/>
        </authorList>
    </citation>
    <scope>PHOSPHORYLATION BY CAMK2</scope>
</reference>
<reference key="7">
    <citation type="journal article" date="2007" name="J. Gen. Physiol.">
        <title>Triadin binding to the C-terminal luminal loop of the ryanodine receptor is important for skeletal muscle excitation contraction coupling.</title>
        <authorList>
            <person name="Goonasekera S.A."/>
            <person name="Beard N.A."/>
            <person name="Groom L."/>
            <person name="Kimura T."/>
            <person name="Lyfenko A.D."/>
            <person name="Rosenfeld A."/>
            <person name="Marty I."/>
            <person name="Dulhunty A.F."/>
            <person name="Dirksen R.T."/>
        </authorList>
    </citation>
    <scope>FUNCTION</scope>
    <scope>INTERACTION WITH RYR1</scope>
    <scope>TISSUE SPECIFICITY</scope>
</reference>
<reference key="8">
    <citation type="journal article" date="2008" name="Cell Calcium">
        <title>Phosphorylation of skeletal muscle calsequestrin enhances its Ca2+ binding capacity and promotes its association with junctin.</title>
        <authorList>
            <person name="Beard N.A."/>
            <person name="Wei L."/>
            <person name="Cheung S.N."/>
            <person name="Kimura T."/>
            <person name="Varsanyi M."/>
            <person name="Dulhunty A.F."/>
        </authorList>
    </citation>
    <scope>INTERACTION WITH CASQ1</scope>
    <scope>SUBCELLULAR LOCATION</scope>
</reference>
<reference key="9">
    <citation type="journal article" date="2009" name="Int. J. Biochem. Cell Biol.">
        <title>Junctin and triadin each activate skeletal ryanodine receptors but junctin alone mediates functional interactions with calsequestrin.</title>
        <authorList>
            <person name="Wei L."/>
            <person name="Gallant E.M."/>
            <person name="Dulhunty A.F."/>
            <person name="Beard N.A."/>
        </authorList>
    </citation>
    <scope>FUNCTION</scope>
    <scope>INTERACTION WITH CASQ1</scope>
    <scope>SUBCELLULAR LOCATION</scope>
</reference>
<keyword id="KW-0025">Alternative splicing</keyword>
<keyword id="KW-0903">Direct protein sequencing</keyword>
<keyword id="KW-1015">Disulfide bond</keyword>
<keyword id="KW-0325">Glycoprotein</keyword>
<keyword id="KW-0472">Membrane</keyword>
<keyword id="KW-0597">Phosphoprotein</keyword>
<keyword id="KW-1185">Reference proteome</keyword>
<keyword id="KW-0703">Sarcoplasmic reticulum</keyword>
<keyword id="KW-0812">Transmembrane</keyword>
<keyword id="KW-1133">Transmembrane helix</keyword>
<name>TRDN_RABIT</name>
<comment type="function">
    <text evidence="1 6 8 11">Contributes to the regulation of lumenal Ca2+ release via the sarcoplasmic reticulum calcium release channels RYR1 and RYR2, a key step in triggering skeletal and heart muscle contraction (PubMed:17846166, PubMed:19398037, PubMed:7721813). Required for normal organization of the triad junction, where T-tubules and the sarcoplasmic reticulum terminal cisternae are in close contact. Required for normal skeletal muscle strength. Plays a role in excitation-contraction coupling in the heart and in regulating the rate of heart beats (By similarity).</text>
</comment>
<comment type="subunit">
    <text evidence="2 6 7 8 9 11">Interacts with CASQ2 (By similarity). Homooligomer of variable subunit number; disulfide-linked. Interacts with CASQ1 and RYR1 in skeletal muscle.</text>
</comment>
<comment type="subcellular location">
    <subcellularLocation>
        <location>Sarcoplasmic reticulum membrane</location>
        <topology evidence="7 8 10 11 13">Single-pass type II membrane protein</topology>
    </subcellularLocation>
</comment>
<comment type="alternative products">
    <event type="alternative splicing"/>
    <isoform>
        <id>Q28820-1</id>
        <name>Skeletal 1</name>
        <name>ST1</name>
        <sequence type="displayed"/>
    </isoform>
    <isoform>
        <id>Q28820-2</id>
        <name>Cardiac 1</name>
        <name>CT1</name>
        <sequence type="described" ref="VSP_004458 VSP_004460"/>
    </isoform>
    <isoform>
        <id>Q28820-3</id>
        <name>Cardiac 2</name>
        <name>CT2</name>
        <sequence type="described" ref="VSP_004459 VSP_004461"/>
    </isoform>
    <isoform>
        <id>Q28820-4</id>
        <name>Cardiac 3</name>
        <name>CT3</name>
        <sequence type="described" ref="VSP_004466"/>
    </isoform>
    <isoform>
        <id>Q28820-5</id>
        <name>Skeletal 2</name>
        <name>ST2</name>
        <sequence type="described" ref="VSP_004462 VSP_004463 VSP_004464 VSP_004465"/>
    </isoform>
    <isoform>
        <id>Q28820-6</id>
        <name>Skeletal 3</name>
        <name>ST3</name>
        <sequence type="described" ref="VSP_004464 VSP_004465"/>
    </isoform>
    <text>Additional isoforms seem to exist.</text>
</comment>
<comment type="tissue specificity">
    <text evidence="6 10 12 13">Detected in skeletal muscle and in heart (at protein level). Detected in skeletal muscle and in heart.</text>
</comment>
<comment type="PTM">
    <text evidence="5">Phosphorylated by CaMK2.</text>
</comment>
<comment type="PTM">
    <text evidence="9">N-glycosylated.</text>
</comment>
<feature type="chain" id="PRO_0000065627" description="Triadin">
    <location>
        <begin position="1"/>
        <end position="706"/>
    </location>
</feature>
<feature type="topological domain" description="Cytoplasmic">
    <location>
        <begin position="1"/>
        <end position="47"/>
    </location>
</feature>
<feature type="transmembrane region" description="Helical" evidence="3">
    <location>
        <begin position="48"/>
        <end position="68"/>
    </location>
</feature>
<feature type="topological domain" description="Lumenal">
    <location>
        <begin position="69"/>
        <end position="706"/>
    </location>
</feature>
<feature type="region of interest" description="Disordered" evidence="4">
    <location>
        <begin position="1"/>
        <end position="28"/>
    </location>
</feature>
<feature type="region of interest" description="Disordered" evidence="4">
    <location>
        <begin position="117"/>
        <end position="265"/>
    </location>
</feature>
<feature type="region of interest" description="Disordered" evidence="4">
    <location>
        <begin position="281"/>
        <end position="663"/>
    </location>
</feature>
<feature type="region of interest" description="Disordered" evidence="4">
    <location>
        <begin position="684"/>
        <end position="706"/>
    </location>
</feature>
<feature type="compositionally biased region" description="Polar residues" evidence="4">
    <location>
        <begin position="8"/>
        <end position="24"/>
    </location>
</feature>
<feature type="compositionally biased region" description="Acidic residues" evidence="4">
    <location>
        <begin position="117"/>
        <end position="127"/>
    </location>
</feature>
<feature type="compositionally biased region" description="Basic and acidic residues" evidence="4">
    <location>
        <begin position="128"/>
        <end position="254"/>
    </location>
</feature>
<feature type="compositionally biased region" description="Basic and acidic residues" evidence="4">
    <location>
        <begin position="309"/>
        <end position="358"/>
    </location>
</feature>
<feature type="compositionally biased region" description="Basic and acidic residues" evidence="4">
    <location>
        <begin position="372"/>
        <end position="432"/>
    </location>
</feature>
<feature type="compositionally biased region" description="Basic and acidic residues" evidence="4">
    <location>
        <begin position="443"/>
        <end position="518"/>
    </location>
</feature>
<feature type="compositionally biased region" description="Basic and acidic residues" evidence="4">
    <location>
        <begin position="525"/>
        <end position="552"/>
    </location>
</feature>
<feature type="compositionally biased region" description="Basic and acidic residues" evidence="4">
    <location>
        <begin position="570"/>
        <end position="588"/>
    </location>
</feature>
<feature type="compositionally biased region" description="Basic and acidic residues" evidence="4">
    <location>
        <begin position="599"/>
        <end position="621"/>
    </location>
</feature>
<feature type="compositionally biased region" description="Basic and acidic residues" evidence="4">
    <location>
        <begin position="628"/>
        <end position="651"/>
    </location>
</feature>
<feature type="glycosylation site" description="N-linked (GlcNAc...) asparagine" evidence="3">
    <location>
        <position position="75"/>
    </location>
</feature>
<feature type="glycosylation site" description="N-linked (GlcNAc...) asparagine" evidence="9">
    <location>
        <position position="625"/>
    </location>
</feature>
<feature type="disulfide bond" description="Interchain" evidence="14">
    <location>
        <position position="270"/>
    </location>
</feature>
<feature type="disulfide bond" description="Interchain" evidence="14">
    <location>
        <position position="671"/>
    </location>
</feature>
<feature type="splice variant" id="VSP_004459" description="In isoform Cardiac 2." evidence="15">
    <original>DQYAFCRYMIDIFVHGDLKPGQSPAIPPPSPTEQASRPTPALPT</original>
    <variation>ECIFLSAATPQGIPNRQQLNDIHHCFLKTKKGGNGQHAFCLKGC</variation>
    <location>
        <begin position="265"/>
        <end position="308"/>
    </location>
</feature>
<feature type="splice variant" id="VSP_004458" description="In isoform Cardiac 1." evidence="15">
    <original>DQYAFCRYMIDIFVHGDLKPGQ</original>
    <variation>GGKQSEEAAGCFKRTLGKKQMQ</variation>
    <location>
        <begin position="265"/>
        <end position="286"/>
    </location>
</feature>
<feature type="splice variant" id="VSP_004460" description="In isoform Cardiac 1." evidence="15">
    <location>
        <begin position="287"/>
        <end position="706"/>
    </location>
</feature>
<feature type="splice variant" id="VSP_004461" description="In isoform Cardiac 2." evidence="15">
    <location>
        <begin position="309"/>
        <end position="706"/>
    </location>
</feature>
<feature type="splice variant" id="VSP_004462" description="In isoform Skeletal 2." evidence="15">
    <original>A</original>
    <variation>E</variation>
    <location>
        <position position="416"/>
    </location>
</feature>
<feature type="splice variant" id="VSP_004463" description="In isoform Skeletal 2." evidence="15">
    <location>
        <begin position="417"/>
        <end position="425"/>
    </location>
</feature>
<feature type="splice variant" id="VSP_004464" description="In isoform Skeletal 2 and isoform Skeletal 3." evidence="15">
    <original>D</original>
    <variation>E</variation>
    <location>
        <position position="585"/>
    </location>
</feature>
<feature type="splice variant" id="VSP_004465" description="In isoform Skeletal 2 and isoform Skeletal 3." evidence="15">
    <location>
        <begin position="586"/>
        <end position="592"/>
    </location>
</feature>
<feature type="splice variant" id="VSP_004466" description="In isoform Cardiac 3." evidence="15">
    <original>SKKAKEEAEEVSSTKKQKSPISFFQCVYLDGYNGYGFQFPVTPAQYPGESSGKPNSPGPKQ</original>
    <variation>LLATVGIWGMNQWMEDLSVTLPSK</variation>
    <location>
        <begin position="646"/>
        <end position="706"/>
    </location>
</feature>
<proteinExistence type="evidence at protein level"/>
<dbReference type="EMBL" id="U31540">
    <property type="protein sequence ID" value="AAC48496.1"/>
    <property type="molecule type" value="mRNA"/>
</dbReference>
<dbReference type="EMBL" id="L10065">
    <property type="protein sequence ID" value="AAA31488.1"/>
    <property type="molecule type" value="mRNA"/>
</dbReference>
<dbReference type="EMBL" id="U31555">
    <property type="protein sequence ID" value="AAC48497.1"/>
    <property type="molecule type" value="mRNA"/>
</dbReference>
<dbReference type="EMBL" id="U34201">
    <property type="protein sequence ID" value="AAC48498.1"/>
    <property type="molecule type" value="mRNA"/>
</dbReference>
<dbReference type="PIR" id="A45990">
    <property type="entry name" value="A45990"/>
</dbReference>
<dbReference type="RefSeq" id="NP_001076212.1">
    <molecule id="Q28820-1"/>
    <property type="nucleotide sequence ID" value="NM_001082743.1"/>
</dbReference>
<dbReference type="FunCoup" id="Q28820">
    <property type="interactions" value="19"/>
</dbReference>
<dbReference type="IntAct" id="Q28820">
    <property type="interactions" value="1"/>
</dbReference>
<dbReference type="MINT" id="Q28820"/>
<dbReference type="STRING" id="9986.ENSOCUP00000024583"/>
<dbReference type="GlyCosmos" id="Q28820">
    <property type="glycosylation" value="2 sites, No reported glycans"/>
</dbReference>
<dbReference type="iPTMnet" id="Q28820"/>
<dbReference type="GeneID" id="100009519"/>
<dbReference type="KEGG" id="ocu:100009519"/>
<dbReference type="CTD" id="10345"/>
<dbReference type="InParanoid" id="Q28820"/>
<dbReference type="OrthoDB" id="9908116at2759"/>
<dbReference type="Proteomes" id="UP000001811">
    <property type="component" value="Unplaced"/>
</dbReference>
<dbReference type="GO" id="GO:0014701">
    <property type="term" value="C:junctional sarcoplasmic reticulum membrane"/>
    <property type="evidence" value="ECO:0007669"/>
    <property type="project" value="TreeGrafter"/>
</dbReference>
<dbReference type="GO" id="GO:0005886">
    <property type="term" value="C:plasma membrane"/>
    <property type="evidence" value="ECO:0007669"/>
    <property type="project" value="TreeGrafter"/>
</dbReference>
<dbReference type="GO" id="GO:0005102">
    <property type="term" value="F:signaling receptor binding"/>
    <property type="evidence" value="ECO:0007669"/>
    <property type="project" value="InterPro"/>
</dbReference>
<dbReference type="GO" id="GO:0060047">
    <property type="term" value="P:heart contraction"/>
    <property type="evidence" value="ECO:0007669"/>
    <property type="project" value="TreeGrafter"/>
</dbReference>
<dbReference type="GO" id="GO:0086036">
    <property type="term" value="P:regulation of cardiac muscle cell membrane potential"/>
    <property type="evidence" value="ECO:0007669"/>
    <property type="project" value="TreeGrafter"/>
</dbReference>
<dbReference type="GO" id="GO:0010880">
    <property type="term" value="P:regulation of release of sequestered calcium ion into cytosol by sarcoplasmic reticulum"/>
    <property type="evidence" value="ECO:0000304"/>
    <property type="project" value="ARUK-UCL"/>
</dbReference>
<dbReference type="InterPro" id="IPR007943">
    <property type="entry name" value="Asp-B-hydro/Triadin_dom"/>
</dbReference>
<dbReference type="InterPro" id="IPR010798">
    <property type="entry name" value="Triadin"/>
</dbReference>
<dbReference type="PANTHER" id="PTHR14106">
    <property type="entry name" value="TRIADIN"/>
    <property type="match status" value="1"/>
</dbReference>
<dbReference type="PANTHER" id="PTHR14106:SF0">
    <property type="entry name" value="TRIADIN"/>
    <property type="match status" value="1"/>
</dbReference>
<dbReference type="Pfam" id="PF05279">
    <property type="entry name" value="Asp-B-Hydro_N"/>
    <property type="match status" value="1"/>
</dbReference>
<protein>
    <recommendedName>
        <fullName>Triadin</fullName>
    </recommendedName>
</protein>